<evidence type="ECO:0000269" key="1">
    <source>
    </source>
</evidence>
<evidence type="ECO:0000303" key="2">
    <source>
    </source>
</evidence>
<evidence type="ECO:0000312" key="3">
    <source>
        <dbReference type="EMBL" id="QNV50553.1"/>
    </source>
</evidence>
<organism>
    <name type="scientific">Escherichia coli (strain K12)</name>
    <dbReference type="NCBI Taxonomy" id="83333"/>
    <lineage>
        <taxon>Bacteria</taxon>
        <taxon>Pseudomonadati</taxon>
        <taxon>Pseudomonadota</taxon>
        <taxon>Gammaproteobacteria</taxon>
        <taxon>Enterobacterales</taxon>
        <taxon>Enterobacteriaceae</taxon>
        <taxon>Escherichia</taxon>
    </lineage>
</organism>
<gene>
    <name evidence="2" type="primary">ysgD</name>
    <name evidence="3" type="ordered locus">b4799</name>
</gene>
<name>YSGD_ECOLI</name>
<keyword id="KW-1185">Reference proteome</keyword>
<dbReference type="EMBL" id="U00096">
    <property type="protein sequence ID" value="QNV50553.1"/>
    <property type="molecule type" value="Genomic_DNA"/>
</dbReference>
<dbReference type="InParanoid" id="P0DSH7"/>
<dbReference type="BioCyc" id="EcoCyc:MONOMER0-4513"/>
<dbReference type="Proteomes" id="UP000000625">
    <property type="component" value="Chromosome"/>
</dbReference>
<dbReference type="InterPro" id="IPR053640">
    <property type="entry name" value="YsgD-like"/>
</dbReference>
<dbReference type="NCBIfam" id="NF041266">
    <property type="entry name" value="YsgD_CorL"/>
    <property type="match status" value="1"/>
</dbReference>
<protein>
    <recommendedName>
        <fullName evidence="2">Protein YsgD</fullName>
    </recommendedName>
</protein>
<reference key="1">
    <citation type="journal article" date="1997" name="Science">
        <title>The complete genome sequence of Escherichia coli K-12.</title>
        <authorList>
            <person name="Blattner F.R."/>
            <person name="Plunkett G. III"/>
            <person name="Bloch C.A."/>
            <person name="Perna N.T."/>
            <person name="Burland V."/>
            <person name="Riley M."/>
            <person name="Collado-Vides J."/>
            <person name="Glasner J.D."/>
            <person name="Rode C.K."/>
            <person name="Mayhew G.F."/>
            <person name="Gregor J."/>
            <person name="Davis N.W."/>
            <person name="Kirkpatrick H.A."/>
            <person name="Goeden M.A."/>
            <person name="Rose D.J."/>
            <person name="Mau B."/>
            <person name="Shao Y."/>
        </authorList>
    </citation>
    <scope>NUCLEOTIDE SEQUENCE [LARGE SCALE GENOMIC DNA]</scope>
    <source>
        <strain>K12 / MG1655 / ATCC 47076</strain>
    </source>
</reference>
<reference key="2">
    <citation type="journal article" date="2019" name="MBio">
        <title>Identifying small proteins by ribosome profiling with stalled initiation complexes.</title>
        <authorList>
            <person name="Weaver J."/>
            <person name="Mohammad F."/>
            <person name="Buskirk A.R."/>
            <person name="Storz G."/>
        </authorList>
    </citation>
    <scope>IDENTIFICATION</scope>
    <scope>INDUCTION</scope>
    <source>
        <strain>K12 / MG1655 / ATCC 47076</strain>
    </source>
</reference>
<sequence length="18" mass="2140">MDTPSRYWLTILSSRINS</sequence>
<accession>P0DSH7</accession>
<accession>A0A7H2C7A6</accession>
<proteinExistence type="evidence at protein level"/>
<feature type="chain" id="PRO_0000447170" description="Protein YsgD">
    <location>
        <begin position="1"/>
        <end position="18"/>
    </location>
</feature>
<comment type="induction">
    <text evidence="1">Expressed at high levels equally in exponential and stationary phase in rich medium (at protein level).</text>
</comment>